<organism>
    <name type="scientific">Roseiflexus castenholzii (strain DSM 13941 / HLO8)</name>
    <dbReference type="NCBI Taxonomy" id="383372"/>
    <lineage>
        <taxon>Bacteria</taxon>
        <taxon>Bacillati</taxon>
        <taxon>Chloroflexota</taxon>
        <taxon>Chloroflexia</taxon>
        <taxon>Chloroflexales</taxon>
        <taxon>Roseiflexineae</taxon>
        <taxon>Roseiflexaceae</taxon>
        <taxon>Roseiflexus</taxon>
    </lineage>
</organism>
<sequence length="218" mass="23809">MDFTNERRAMIDLLIRRGISDQRVLDAMAQTPRHVFVPAHERSHAYSDQALPIGEGQTISQPYMVALMIEALQLAPTDRVLEIGAGSGYAAAVLSRIVAKVHTIECREALAASAAALLRTLGYDNVTVHVGDGTQGLPDYAPFDAILVSAASPWVPAPLREQLASSGRLVIPVGGRQAQILLRLRRTGDTLRTERLCDVRFVPLIGGHAWTTEHYPER</sequence>
<accession>A7NI01</accession>
<evidence type="ECO:0000255" key="1">
    <source>
        <dbReference type="HAMAP-Rule" id="MF_00090"/>
    </source>
</evidence>
<feature type="chain" id="PRO_0000351929" description="Protein-L-isoaspartate O-methyltransferase">
    <location>
        <begin position="1"/>
        <end position="218"/>
    </location>
</feature>
<feature type="active site" evidence="1">
    <location>
        <position position="60"/>
    </location>
</feature>
<proteinExistence type="inferred from homology"/>
<gene>
    <name evidence="1" type="primary">pcm</name>
    <name type="ordered locus">Rcas_0989</name>
</gene>
<comment type="function">
    <text evidence="1">Catalyzes the methyl esterification of L-isoaspartyl residues in peptides and proteins that result from spontaneous decomposition of normal L-aspartyl and L-asparaginyl residues. It plays a role in the repair and/or degradation of damaged proteins.</text>
</comment>
<comment type="catalytic activity">
    <reaction evidence="1">
        <text>[protein]-L-isoaspartate + S-adenosyl-L-methionine = [protein]-L-isoaspartate alpha-methyl ester + S-adenosyl-L-homocysteine</text>
        <dbReference type="Rhea" id="RHEA:12705"/>
        <dbReference type="Rhea" id="RHEA-COMP:12143"/>
        <dbReference type="Rhea" id="RHEA-COMP:12144"/>
        <dbReference type="ChEBI" id="CHEBI:57856"/>
        <dbReference type="ChEBI" id="CHEBI:59789"/>
        <dbReference type="ChEBI" id="CHEBI:90596"/>
        <dbReference type="ChEBI" id="CHEBI:90598"/>
        <dbReference type="EC" id="2.1.1.77"/>
    </reaction>
</comment>
<comment type="subcellular location">
    <subcellularLocation>
        <location evidence="1">Cytoplasm</location>
    </subcellularLocation>
</comment>
<comment type="similarity">
    <text evidence="1">Belongs to the methyltransferase superfamily. L-isoaspartyl/D-aspartyl protein methyltransferase family.</text>
</comment>
<reference key="1">
    <citation type="submission" date="2007-08" db="EMBL/GenBank/DDBJ databases">
        <title>Complete sequence of Roseiflexus castenholzii DSM 13941.</title>
        <authorList>
            <consortium name="US DOE Joint Genome Institute"/>
            <person name="Copeland A."/>
            <person name="Lucas S."/>
            <person name="Lapidus A."/>
            <person name="Barry K."/>
            <person name="Glavina del Rio T."/>
            <person name="Dalin E."/>
            <person name="Tice H."/>
            <person name="Pitluck S."/>
            <person name="Thompson L.S."/>
            <person name="Brettin T."/>
            <person name="Bruce D."/>
            <person name="Detter J.C."/>
            <person name="Han C."/>
            <person name="Tapia R."/>
            <person name="Schmutz J."/>
            <person name="Larimer F."/>
            <person name="Land M."/>
            <person name="Hauser L."/>
            <person name="Kyrpides N."/>
            <person name="Mikhailova N."/>
            <person name="Bryant D.A."/>
            <person name="Hanada S."/>
            <person name="Tsukatani Y."/>
            <person name="Richardson P."/>
        </authorList>
    </citation>
    <scope>NUCLEOTIDE SEQUENCE [LARGE SCALE GENOMIC DNA]</scope>
    <source>
        <strain>DSM 13941 / HLO8</strain>
    </source>
</reference>
<name>PIMT_ROSCS</name>
<dbReference type="EC" id="2.1.1.77" evidence="1"/>
<dbReference type="EMBL" id="CP000804">
    <property type="protein sequence ID" value="ABU57098.1"/>
    <property type="molecule type" value="Genomic_DNA"/>
</dbReference>
<dbReference type="RefSeq" id="WP_012119528.1">
    <property type="nucleotide sequence ID" value="NC_009767.1"/>
</dbReference>
<dbReference type="SMR" id="A7NI01"/>
<dbReference type="STRING" id="383372.Rcas_0989"/>
<dbReference type="KEGG" id="rca:Rcas_0989"/>
<dbReference type="eggNOG" id="COG2518">
    <property type="taxonomic scope" value="Bacteria"/>
</dbReference>
<dbReference type="HOGENOM" id="CLU_055432_2_0_0"/>
<dbReference type="OrthoDB" id="9772751at2"/>
<dbReference type="Proteomes" id="UP000000263">
    <property type="component" value="Chromosome"/>
</dbReference>
<dbReference type="GO" id="GO:0005737">
    <property type="term" value="C:cytoplasm"/>
    <property type="evidence" value="ECO:0007669"/>
    <property type="project" value="UniProtKB-SubCell"/>
</dbReference>
<dbReference type="GO" id="GO:0004719">
    <property type="term" value="F:protein-L-isoaspartate (D-aspartate) O-methyltransferase activity"/>
    <property type="evidence" value="ECO:0007669"/>
    <property type="project" value="UniProtKB-UniRule"/>
</dbReference>
<dbReference type="GO" id="GO:0032259">
    <property type="term" value="P:methylation"/>
    <property type="evidence" value="ECO:0007669"/>
    <property type="project" value="UniProtKB-KW"/>
</dbReference>
<dbReference type="GO" id="GO:0036211">
    <property type="term" value="P:protein modification process"/>
    <property type="evidence" value="ECO:0007669"/>
    <property type="project" value="UniProtKB-UniRule"/>
</dbReference>
<dbReference type="GO" id="GO:0030091">
    <property type="term" value="P:protein repair"/>
    <property type="evidence" value="ECO:0007669"/>
    <property type="project" value="UniProtKB-UniRule"/>
</dbReference>
<dbReference type="CDD" id="cd02440">
    <property type="entry name" value="AdoMet_MTases"/>
    <property type="match status" value="1"/>
</dbReference>
<dbReference type="FunFam" id="3.40.50.150:FF:000010">
    <property type="entry name" value="Protein-L-isoaspartate O-methyltransferase"/>
    <property type="match status" value="1"/>
</dbReference>
<dbReference type="Gene3D" id="3.40.50.150">
    <property type="entry name" value="Vaccinia Virus protein VP39"/>
    <property type="match status" value="1"/>
</dbReference>
<dbReference type="HAMAP" id="MF_00090">
    <property type="entry name" value="PIMT"/>
    <property type="match status" value="1"/>
</dbReference>
<dbReference type="InterPro" id="IPR000682">
    <property type="entry name" value="PCMT"/>
</dbReference>
<dbReference type="InterPro" id="IPR029063">
    <property type="entry name" value="SAM-dependent_MTases_sf"/>
</dbReference>
<dbReference type="NCBIfam" id="TIGR00080">
    <property type="entry name" value="pimt"/>
    <property type="match status" value="1"/>
</dbReference>
<dbReference type="NCBIfam" id="NF001453">
    <property type="entry name" value="PRK00312.1"/>
    <property type="match status" value="1"/>
</dbReference>
<dbReference type="PANTHER" id="PTHR11579">
    <property type="entry name" value="PROTEIN-L-ISOASPARTATE O-METHYLTRANSFERASE"/>
    <property type="match status" value="1"/>
</dbReference>
<dbReference type="PANTHER" id="PTHR11579:SF0">
    <property type="entry name" value="PROTEIN-L-ISOASPARTATE(D-ASPARTATE) O-METHYLTRANSFERASE"/>
    <property type="match status" value="1"/>
</dbReference>
<dbReference type="Pfam" id="PF01135">
    <property type="entry name" value="PCMT"/>
    <property type="match status" value="1"/>
</dbReference>
<dbReference type="SUPFAM" id="SSF53335">
    <property type="entry name" value="S-adenosyl-L-methionine-dependent methyltransferases"/>
    <property type="match status" value="1"/>
</dbReference>
<dbReference type="PROSITE" id="PS01279">
    <property type="entry name" value="PCMT"/>
    <property type="match status" value="1"/>
</dbReference>
<keyword id="KW-0963">Cytoplasm</keyword>
<keyword id="KW-0489">Methyltransferase</keyword>
<keyword id="KW-1185">Reference proteome</keyword>
<keyword id="KW-0949">S-adenosyl-L-methionine</keyword>
<keyword id="KW-0808">Transferase</keyword>
<protein>
    <recommendedName>
        <fullName evidence="1">Protein-L-isoaspartate O-methyltransferase</fullName>
        <ecNumber evidence="1">2.1.1.77</ecNumber>
    </recommendedName>
    <alternativeName>
        <fullName evidence="1">L-isoaspartyl protein carboxyl methyltransferase</fullName>
    </alternativeName>
    <alternativeName>
        <fullName evidence="1">Protein L-isoaspartyl methyltransferase</fullName>
    </alternativeName>
    <alternativeName>
        <fullName evidence="1">Protein-beta-aspartate methyltransferase</fullName>
        <shortName evidence="1">PIMT</shortName>
    </alternativeName>
</protein>